<sequence length="233" mass="26713">KREAEANRTPEQQIYDPYKYVETVFVVDKAMVTKYNGDLDKIKTRMYEAANNMNEMYRYMFFRVVMVGLIIWTEEDKITVKPDVDYTLNAFAEWRKTYLLAEKKHDNAQLITGIDFRGSIIGYAYIGSMCHPKRSVGIIQDYSPINLVLAVIMAHEMGHNLGIHHDDGYCYCGGYPCIMGPSISPEPSKFFSNCSYIQCWDFIMNHNPECIDNEPLGTDIISPPLCGNELLEA</sequence>
<accession>A2TK72</accession>
<protein>
    <recommendedName>
        <fullName>Zinc metalloproteinase recombinant fibrinogenase II</fullName>
        <shortName>FIIa</shortName>
        <shortName>rF II</shortName>
        <ecNumber evidence="10">3.4.24.-</ecNumber>
    </recommendedName>
    <alternativeName>
        <fullName>Snake venom metalloproteinase</fullName>
        <shortName>SVMP</shortName>
    </alternativeName>
</protein>
<organism>
    <name type="scientific">Deinagkistrodon acutus</name>
    <name type="common">Hundred-pace snake</name>
    <name type="synonym">Agkistrodon acutus</name>
    <dbReference type="NCBI Taxonomy" id="36307"/>
    <lineage>
        <taxon>Eukaryota</taxon>
        <taxon>Metazoa</taxon>
        <taxon>Chordata</taxon>
        <taxon>Craniata</taxon>
        <taxon>Vertebrata</taxon>
        <taxon>Euteleostomi</taxon>
        <taxon>Lepidosauria</taxon>
        <taxon>Squamata</taxon>
        <taxon>Bifurcata</taxon>
        <taxon>Unidentata</taxon>
        <taxon>Episquamata</taxon>
        <taxon>Toxicofera</taxon>
        <taxon>Serpentes</taxon>
        <taxon>Colubroidea</taxon>
        <taxon>Viperidae</taxon>
        <taxon>Crotalinae</taxon>
        <taxon>Deinagkistrodon</taxon>
    </lineage>
</organism>
<dbReference type="EC" id="3.4.24.-" evidence="10"/>
<dbReference type="EMBL" id="EF210359">
    <property type="protein sequence ID" value="ABM92914.1"/>
    <property type="molecule type" value="mRNA"/>
</dbReference>
<dbReference type="SMR" id="A2TK72"/>
<dbReference type="MEROPS" id="M12.334"/>
<dbReference type="BRENDA" id="3.4.24.B39">
    <property type="organism ID" value="191"/>
</dbReference>
<dbReference type="GO" id="GO:0005576">
    <property type="term" value="C:extracellular region"/>
    <property type="evidence" value="ECO:0007669"/>
    <property type="project" value="UniProtKB-SubCell"/>
</dbReference>
<dbReference type="GO" id="GO:0005886">
    <property type="term" value="C:plasma membrane"/>
    <property type="evidence" value="ECO:0007669"/>
    <property type="project" value="TreeGrafter"/>
</dbReference>
<dbReference type="GO" id="GO:0046872">
    <property type="term" value="F:metal ion binding"/>
    <property type="evidence" value="ECO:0007669"/>
    <property type="project" value="UniProtKB-KW"/>
</dbReference>
<dbReference type="GO" id="GO:0004222">
    <property type="term" value="F:metalloendopeptidase activity"/>
    <property type="evidence" value="ECO:0007669"/>
    <property type="project" value="InterPro"/>
</dbReference>
<dbReference type="GO" id="GO:0090729">
    <property type="term" value="F:toxin activity"/>
    <property type="evidence" value="ECO:0007669"/>
    <property type="project" value="UniProtKB-KW"/>
</dbReference>
<dbReference type="GO" id="GO:0006508">
    <property type="term" value="P:proteolysis"/>
    <property type="evidence" value="ECO:0007669"/>
    <property type="project" value="UniProtKB-KW"/>
</dbReference>
<dbReference type="CDD" id="cd04269">
    <property type="entry name" value="ZnMc_adamalysin_II_like"/>
    <property type="match status" value="1"/>
</dbReference>
<dbReference type="FunFam" id="3.40.390.10:FF:000002">
    <property type="entry name" value="Disintegrin and metalloproteinase domain-containing protein 22"/>
    <property type="match status" value="1"/>
</dbReference>
<dbReference type="Gene3D" id="3.40.390.10">
    <property type="entry name" value="Collagenase (Catalytic Domain)"/>
    <property type="match status" value="1"/>
</dbReference>
<dbReference type="InterPro" id="IPR024079">
    <property type="entry name" value="MetalloPept_cat_dom_sf"/>
</dbReference>
<dbReference type="InterPro" id="IPR001590">
    <property type="entry name" value="Peptidase_M12B"/>
</dbReference>
<dbReference type="InterPro" id="IPR034027">
    <property type="entry name" value="Reprolysin_adamalysin"/>
</dbReference>
<dbReference type="PANTHER" id="PTHR11905">
    <property type="entry name" value="ADAM A DISINTEGRIN AND METALLOPROTEASE DOMAIN"/>
    <property type="match status" value="1"/>
</dbReference>
<dbReference type="PANTHER" id="PTHR11905:SF32">
    <property type="entry name" value="DISINTEGRIN AND METALLOPROTEINASE DOMAIN-CONTAINING PROTEIN 28"/>
    <property type="match status" value="1"/>
</dbReference>
<dbReference type="Pfam" id="PF01421">
    <property type="entry name" value="Reprolysin"/>
    <property type="match status" value="1"/>
</dbReference>
<dbReference type="SUPFAM" id="SSF55486">
    <property type="entry name" value="Metalloproteases ('zincins'), catalytic domain"/>
    <property type="match status" value="1"/>
</dbReference>
<dbReference type="PROSITE" id="PS50215">
    <property type="entry name" value="ADAM_MEPRO"/>
    <property type="match status" value="1"/>
</dbReference>
<dbReference type="PROSITE" id="PS00142">
    <property type="entry name" value="ZINC_PROTEASE"/>
    <property type="match status" value="1"/>
</dbReference>
<feature type="chain" id="PRO_0000432130" description="Zinc metalloproteinase recombinant fibrinogenase II">
    <location>
        <begin position="1" status="less than"/>
        <end position="233" status="greater than"/>
    </location>
</feature>
<feature type="domain" description="Peptidase M12B" evidence="5">
    <location>
        <begin position="19"/>
        <end position="215"/>
    </location>
</feature>
<feature type="active site" evidence="5 7">
    <location>
        <position position="156"/>
    </location>
</feature>
<feature type="binding site" evidence="1">
    <location>
        <position position="22"/>
    </location>
    <ligand>
        <name>Ca(2+)</name>
        <dbReference type="ChEBI" id="CHEBI:29108"/>
        <label>1</label>
    </ligand>
</feature>
<feature type="binding site" evidence="1">
    <location>
        <position position="106"/>
    </location>
    <ligand>
        <name>Ca(2+)</name>
        <dbReference type="ChEBI" id="CHEBI:29108"/>
        <label>1</label>
    </ligand>
</feature>
<feature type="binding site" evidence="5">
    <location>
        <position position="155"/>
    </location>
    <ligand>
        <name>Zn(2+)</name>
        <dbReference type="ChEBI" id="CHEBI:29105"/>
        <note>catalytic</note>
    </ligand>
</feature>
<feature type="binding site" evidence="5">
    <location>
        <position position="159"/>
    </location>
    <ligand>
        <name>Zn(2+)</name>
        <dbReference type="ChEBI" id="CHEBI:29105"/>
        <note>catalytic</note>
    </ligand>
</feature>
<feature type="binding site" evidence="5">
    <location>
        <position position="165"/>
    </location>
    <ligand>
        <name>Zn(2+)</name>
        <dbReference type="ChEBI" id="CHEBI:29105"/>
        <note>catalytic</note>
    </ligand>
</feature>
<feature type="binding site" evidence="1">
    <location>
        <position position="210"/>
    </location>
    <ligand>
        <name>Ca(2+)</name>
        <dbReference type="ChEBI" id="CHEBI:29108"/>
        <label>1</label>
    </ligand>
</feature>
<feature type="binding site" evidence="1">
    <location>
        <position position="213"/>
    </location>
    <ligand>
        <name>Ca(2+)</name>
        <dbReference type="ChEBI" id="CHEBI:29108"/>
        <label>1</label>
    </ligand>
</feature>
<feature type="binding site" evidence="1">
    <location>
        <position position="228"/>
    </location>
    <ligand>
        <name>Ca(2+)</name>
        <dbReference type="ChEBI" id="CHEBI:29108"/>
        <label>2</label>
    </ligand>
</feature>
<feature type="binding site" evidence="1">
    <location>
        <position position="230"/>
    </location>
    <ligand>
        <name>Ca(2+)</name>
        <dbReference type="ChEBI" id="CHEBI:29108"/>
        <label>2</label>
    </ligand>
</feature>
<feature type="binding site" evidence="1">
    <location>
        <position position="232"/>
    </location>
    <ligand>
        <name>Ca(2+)</name>
        <dbReference type="ChEBI" id="CHEBI:29108"/>
        <label>2</label>
    </ligand>
</feature>
<feature type="glycosylation site" description="N-linked (GlcNAc...) asparagine" evidence="6">
    <location>
        <position position="193"/>
    </location>
</feature>
<feature type="disulfide bond" evidence="2">
    <location>
        <begin position="130"/>
        <end position="210"/>
    </location>
</feature>
<feature type="disulfide bond" evidence="2">
    <location>
        <begin position="170"/>
        <end position="194"/>
    </location>
</feature>
<feature type="disulfide bond" evidence="2">
    <location>
        <begin position="172"/>
        <end position="177"/>
    </location>
</feature>
<feature type="non-terminal residue">
    <location>
        <position position="1"/>
    </location>
</feature>
<feature type="non-terminal residue">
    <location>
        <position position="233"/>
    </location>
</feature>
<evidence type="ECO:0000250" key="1"/>
<evidence type="ECO:0000250" key="2">
    <source>
        <dbReference type="UniProtKB" id="O93523"/>
    </source>
</evidence>
<evidence type="ECO:0000250" key="3">
    <source>
        <dbReference type="UniProtKB" id="Q9PW35"/>
    </source>
</evidence>
<evidence type="ECO:0000250" key="4">
    <source>
        <dbReference type="UniProtKB" id="Q9W6M5"/>
    </source>
</evidence>
<evidence type="ECO:0000255" key="5">
    <source>
        <dbReference type="PROSITE-ProRule" id="PRU00276"/>
    </source>
</evidence>
<evidence type="ECO:0000255" key="6">
    <source>
        <dbReference type="PROSITE-ProRule" id="PRU00498"/>
    </source>
</evidence>
<evidence type="ECO:0000255" key="7">
    <source>
        <dbReference type="PROSITE-ProRule" id="PRU10095"/>
    </source>
</evidence>
<evidence type="ECO:0000269" key="8">
    <source>
    </source>
</evidence>
<evidence type="ECO:0000269" key="9">
    <source>
    </source>
</evidence>
<evidence type="ECO:0000269" key="10">
    <source>
    </source>
</evidence>
<evidence type="ECO:0000269" key="11">
    <source>
    </source>
</evidence>
<evidence type="ECO:0000269" key="12">
    <source>
    </source>
</evidence>
<evidence type="ECO:0000305" key="13"/>
<proteinExistence type="evidence at protein level"/>
<reference key="1">
    <citation type="journal article" date="2008" name="Biochem. Pharmacol.">
        <title>Recombinant fibrinogenase from Agkistrodon acutus venom protects against sepsis via direct degradation of fibrin and TNF-alpha.</title>
        <authorList>
            <person name="Wang R."/>
            <person name="Qiu P."/>
            <person name="Jiang W."/>
            <person name="Cai X."/>
            <person name="Ou Y."/>
            <person name="Su X."/>
            <person name="Cai J."/>
            <person name="Chen J."/>
            <person name="Yin W."/>
            <person name="Yan G."/>
        </authorList>
    </citation>
    <scope>NUCLEOTIDE SEQUENCE [MRNA]</scope>
    <scope>FUNCTION</scope>
    <scope>TOXIC DOSE</scope>
    <source>
        <tissue>Salivary gland</tissue>
    </source>
</reference>
<reference key="2">
    <citation type="journal article" date="2007" name="Transl. Res.">
        <title>The effect of fibrinolytic enzyme FIIa from Agkistrodon acutus venom on disseminated intravascular coagulation in rabbits.</title>
        <authorList>
            <person name="Lin X."/>
            <person name="Liang X.X."/>
            <person name="Chen J.S."/>
            <person name="Chen Q."/>
            <person name="Qiu P.X."/>
            <person name="Yan G.M."/>
        </authorList>
    </citation>
    <scope>FUNCTION</scope>
</reference>
<reference key="3">
    <citation type="journal article" date="2009" name="Biochimie">
        <title>Enzymatic activities and functional characterization of a novel recombinant snake venom proteinase from Agkistrodon acutus.</title>
        <authorList>
            <person name="Jiang W."/>
            <person name="Ma T."/>
            <person name="Su X."/>
            <person name="Qiu P."/>
            <person name="Yan G."/>
        </authorList>
    </citation>
    <scope>FUNCTION</scope>
    <scope>CATALYTIC ACTIVITY</scope>
    <scope>ACTIVITY REGULATION</scope>
    <scope>BIOPHYSICOCHEMICAL PROPERTIES</scope>
</reference>
<reference key="4">
    <citation type="journal article" date="2009" name="Thromb. Res.">
        <title>Novel recombinant fibrinogenase of Agkistrodon acutus venom protects against LPS-induced DIC.</title>
        <authorList>
            <person name="Wang R."/>
            <person name="Cai J."/>
            <person name="Huang Y."/>
            <person name="Xu D."/>
            <person name="Sang H."/>
            <person name="Yan G."/>
        </authorList>
    </citation>
    <scope>FUNCTION</scope>
</reference>
<reference key="5">
    <citation type="journal article" date="2013" name="Biochem. Pharmacol.">
        <title>A novel recombinant fibrinogenase of Agkistrodon acutus venom protects against hyperacute rejection via degradation of complements.</title>
        <authorList>
            <person name="Lin X."/>
            <person name="Qi J.Z."/>
            <person name="Chen M.H."/>
            <person name="Qiu B.T."/>
            <person name="Huang Z.H."/>
            <person name="Qiu P.X."/>
            <person name="Chen J.S."/>
            <person name="Yan G.M."/>
        </authorList>
    </citation>
    <scope>FUNCTION</scope>
</reference>
<comment type="function">
    <text evidence="8 9 10 11 12">Snake venom zinc metalloprotease that acts at several levels. It has direct fibrino(geno)lytic activity (Aalpha chain of fibrinogen is cleaved quickly, Bbeta chain slowly, and gamma chain even more slowly) and degradation of TNF-alpha. These activities permit to protect against sepsis and disseminated intravascular coagulation (PubMed:17964518, PubMed:18634754, PubMed:19013210, PubMed:19070354). It inhibits ADP-induced platelet aggregation in human platelet-rich plasma (IC(50)=65.4 ug/ml) (PubMed:19013210). It decreases the activity of complement by degrading human C5, C6 and C9 in vitro, decreasing serum levels of C1q, C3 and C4 in rat, and inhibiting the MAC deposition on HUVECs membrane. This inhibition of complement protects against hyperacute rejection that is the main barrier in xenotransplantation (PubMed:23178656). Has preference for Lys at the P1 position. Cleaves insulin B chain at '36-Val-|-Glu-37', '39-Leu-|-Tyr-40', and '48-Phe-|-Phe-49' bonds. Also cleaves fibronectin and type IV collagen (PubMed:19013210).</text>
</comment>
<comment type="cofactor">
    <cofactor evidence="3">
        <name>Zn(2+)</name>
        <dbReference type="ChEBI" id="CHEBI:29105"/>
    </cofactor>
    <text evidence="3">Binds 1 zinc ion per subunit.</text>
</comment>
<comment type="activity regulation">
    <text evidence="10">Inhibited by PMSF and EDTA. Slightly inhibited by Cu(2+) and Zn(2+). Not inhibited by aprotinin, SBTI, Ca(2+), Mg(2+), Na(+) and K(+).</text>
</comment>
<comment type="biophysicochemical properties">
    <kinetics>
        <KM evidence="10">538.2 uM for N-(p-Tosyl)-Gly-Pro-Lys-pNA</KM>
    </kinetics>
    <phDependence>
        <text evidence="10">Optimum pH is 7.0-10.5.</text>
    </phDependence>
    <temperatureDependence>
        <text evidence="10">Optimum temperature is 30-50 degrees Celsius.</text>
    </temperatureDependence>
</comment>
<comment type="subcellular location">
    <subcellularLocation>
        <location evidence="4">Secreted</location>
    </subcellularLocation>
</comment>
<comment type="tissue specificity">
    <text evidence="13">Expressed by the venom gland.</text>
</comment>
<comment type="toxic dose">
    <text evidence="9">LD(50) is 53.5 mg/kg by intravenous injection into mice.</text>
</comment>
<comment type="miscellaneous">
    <text evidence="13">This recombinant protein is 95% identical to the peptidase M12B domain of the zinc metalloproteinase-disintegrin-like acurhagin (AC Q9W6M5).</text>
</comment>
<comment type="miscellaneous">
    <text evidence="8 10">Negative results: does not activate plasminogen.</text>
</comment>
<comment type="similarity">
    <text evidence="13">Belongs to the venom metalloproteinase (M12B) family. P-III subfamily.</text>
</comment>
<keyword id="KW-0106">Calcium</keyword>
<keyword id="KW-1216">Complement system impairing toxin</keyword>
<keyword id="KW-1015">Disulfide bond</keyword>
<keyword id="KW-1206">Fibrinogenolytic toxin</keyword>
<keyword id="KW-1205">Fibrinolytic toxin</keyword>
<keyword id="KW-0325">Glycoprotein</keyword>
<keyword id="KW-1199">Hemostasis impairing toxin</keyword>
<keyword id="KW-0378">Hydrolase</keyword>
<keyword id="KW-0479">Metal-binding</keyword>
<keyword id="KW-0482">Metalloprotease</keyword>
<keyword id="KW-0645">Protease</keyword>
<keyword id="KW-0964">Secreted</keyword>
<keyword id="KW-0800">Toxin</keyword>
<keyword id="KW-0862">Zinc</keyword>
<name>VM3A2_DEIAC</name>